<organism>
    <name type="scientific">Mus musculus</name>
    <name type="common">Mouse</name>
    <dbReference type="NCBI Taxonomy" id="10090"/>
    <lineage>
        <taxon>Eukaryota</taxon>
        <taxon>Metazoa</taxon>
        <taxon>Chordata</taxon>
        <taxon>Craniata</taxon>
        <taxon>Vertebrata</taxon>
        <taxon>Euteleostomi</taxon>
        <taxon>Mammalia</taxon>
        <taxon>Eutheria</taxon>
        <taxon>Euarchontoglires</taxon>
        <taxon>Glires</taxon>
        <taxon>Rodentia</taxon>
        <taxon>Myomorpha</taxon>
        <taxon>Muroidea</taxon>
        <taxon>Muridae</taxon>
        <taxon>Murinae</taxon>
        <taxon>Mus</taxon>
        <taxon>Mus</taxon>
    </lineage>
</organism>
<comment type="similarity">
    <text evidence="2">Belongs to the UPF0500 family.</text>
</comment>
<sequence>MFAAIQPGLAEGAQYPGSLPPGVCQPDLQPDNNSNFVESAKDANKNWHGVPGKVDPILIRSSSESPSDNQVFQATRLPEAGVRSPPEGAEIPGAEPEKLSGASSVCSPLEDIGYASSSLSIDSFSSSPEPVCDTPRGPSPLDPLLPSVAQAVQQLQAQERYKEQEKEKHHAHLVMYRRLALLQWIRALQHQLVDQQARLQESFDTILDNRKELIRCLQQREAPCRHQDQG</sequence>
<protein>
    <recommendedName>
        <fullName>UPF0500 protein C1orf216 homolog</fullName>
    </recommendedName>
</protein>
<evidence type="ECO:0000256" key="1">
    <source>
        <dbReference type="SAM" id="MobiDB-lite"/>
    </source>
</evidence>
<evidence type="ECO:0000305" key="2"/>
<dbReference type="EMBL" id="AK077438">
    <property type="protein sequence ID" value="BAC36801.1"/>
    <property type="molecule type" value="mRNA"/>
</dbReference>
<dbReference type="EMBL" id="AL606935">
    <property type="status" value="NOT_ANNOTATED_CDS"/>
    <property type="molecule type" value="Genomic_DNA"/>
</dbReference>
<dbReference type="CCDS" id="CCDS18656.1"/>
<dbReference type="RefSeq" id="NP_001013777.2">
    <property type="nucleotide sequence ID" value="NM_001013755.4"/>
</dbReference>
<dbReference type="RefSeq" id="NP_001139422.1">
    <property type="nucleotide sequence ID" value="NM_001145950.2"/>
</dbReference>
<dbReference type="SMR" id="Q8BP99"/>
<dbReference type="BioGRID" id="231015">
    <property type="interactions" value="1"/>
</dbReference>
<dbReference type="FunCoup" id="Q8BP99">
    <property type="interactions" value="39"/>
</dbReference>
<dbReference type="iPTMnet" id="Q8BP99"/>
<dbReference type="PhosphoSitePlus" id="Q8BP99"/>
<dbReference type="jPOST" id="Q8BP99"/>
<dbReference type="PaxDb" id="10090-ENSMUSP00000095496"/>
<dbReference type="PeptideAtlas" id="Q8BP99"/>
<dbReference type="Pumba" id="Q8BP99"/>
<dbReference type="Antibodypedia" id="31583">
    <property type="antibodies" value="79 antibodies from 16 providers"/>
</dbReference>
<dbReference type="Ensembl" id="ENSMUST00000097886.4">
    <property type="protein sequence ID" value="ENSMUSP00000095496.4"/>
    <property type="gene ID" value="ENSMUSG00000073755.5"/>
</dbReference>
<dbReference type="Ensembl" id="ENSMUST00000164362.2">
    <property type="protein sequence ID" value="ENSMUSP00000128538.2"/>
    <property type="gene ID" value="ENSMUSG00000073755.5"/>
</dbReference>
<dbReference type="GeneID" id="230757"/>
<dbReference type="KEGG" id="mmu:230757"/>
<dbReference type="UCSC" id="uc008utp.2">
    <property type="organism name" value="mouse"/>
</dbReference>
<dbReference type="AGR" id="MGI:3609248"/>
<dbReference type="MGI" id="MGI:3609248">
    <property type="gene designation" value="5730409E04Rik"/>
</dbReference>
<dbReference type="VEuPathDB" id="HostDB:ENSMUSG00000073755"/>
<dbReference type="eggNOG" id="ENOG502S1PX">
    <property type="taxonomic scope" value="Eukaryota"/>
</dbReference>
<dbReference type="GeneTree" id="ENSGT00390000001867"/>
<dbReference type="HOGENOM" id="CLU_1156086_0_0_1"/>
<dbReference type="InParanoid" id="Q8BP99"/>
<dbReference type="OMA" id="GMPGKVE"/>
<dbReference type="OrthoDB" id="9900901at2759"/>
<dbReference type="PhylomeDB" id="Q8BP99"/>
<dbReference type="TreeFam" id="TF335932"/>
<dbReference type="BioGRID-ORCS" id="230757">
    <property type="hits" value="1 hit in 77 CRISPR screens"/>
</dbReference>
<dbReference type="PRO" id="PR:Q8BP99"/>
<dbReference type="Proteomes" id="UP000000589">
    <property type="component" value="Chromosome 4"/>
</dbReference>
<dbReference type="RNAct" id="Q8BP99">
    <property type="molecule type" value="protein"/>
</dbReference>
<dbReference type="Bgee" id="ENSMUSG00000073755">
    <property type="expression patterns" value="Expressed in dentate gyrus of hippocampal formation granule cell and 179 other cell types or tissues"/>
</dbReference>
<dbReference type="InterPro" id="IPR027812">
    <property type="entry name" value="DUF4653"/>
</dbReference>
<dbReference type="PANTHER" id="PTHR35673">
    <property type="entry name" value="UPF0500 PROTEIN C1ORF216"/>
    <property type="match status" value="1"/>
</dbReference>
<dbReference type="PANTHER" id="PTHR35673:SF1">
    <property type="entry name" value="UPF0500 PROTEIN C1ORF216"/>
    <property type="match status" value="1"/>
</dbReference>
<dbReference type="Pfam" id="PF15546">
    <property type="entry name" value="DUF4653"/>
    <property type="match status" value="1"/>
</dbReference>
<keyword id="KW-1185">Reference proteome</keyword>
<name>CA216_MOUSE</name>
<accession>Q8BP99</accession>
<accession>A2A7K4</accession>
<reference key="1">
    <citation type="journal article" date="2005" name="Science">
        <title>The transcriptional landscape of the mammalian genome.</title>
        <authorList>
            <person name="Carninci P."/>
            <person name="Kasukawa T."/>
            <person name="Katayama S."/>
            <person name="Gough J."/>
            <person name="Frith M.C."/>
            <person name="Maeda N."/>
            <person name="Oyama R."/>
            <person name="Ravasi T."/>
            <person name="Lenhard B."/>
            <person name="Wells C."/>
            <person name="Kodzius R."/>
            <person name="Shimokawa K."/>
            <person name="Bajic V.B."/>
            <person name="Brenner S.E."/>
            <person name="Batalov S."/>
            <person name="Forrest A.R."/>
            <person name="Zavolan M."/>
            <person name="Davis M.J."/>
            <person name="Wilming L.G."/>
            <person name="Aidinis V."/>
            <person name="Allen J.E."/>
            <person name="Ambesi-Impiombato A."/>
            <person name="Apweiler R."/>
            <person name="Aturaliya R.N."/>
            <person name="Bailey T.L."/>
            <person name="Bansal M."/>
            <person name="Baxter L."/>
            <person name="Beisel K.W."/>
            <person name="Bersano T."/>
            <person name="Bono H."/>
            <person name="Chalk A.M."/>
            <person name="Chiu K.P."/>
            <person name="Choudhary V."/>
            <person name="Christoffels A."/>
            <person name="Clutterbuck D.R."/>
            <person name="Crowe M.L."/>
            <person name="Dalla E."/>
            <person name="Dalrymple B.P."/>
            <person name="de Bono B."/>
            <person name="Della Gatta G."/>
            <person name="di Bernardo D."/>
            <person name="Down T."/>
            <person name="Engstrom P."/>
            <person name="Fagiolini M."/>
            <person name="Faulkner G."/>
            <person name="Fletcher C.F."/>
            <person name="Fukushima T."/>
            <person name="Furuno M."/>
            <person name="Futaki S."/>
            <person name="Gariboldi M."/>
            <person name="Georgii-Hemming P."/>
            <person name="Gingeras T.R."/>
            <person name="Gojobori T."/>
            <person name="Green R.E."/>
            <person name="Gustincich S."/>
            <person name="Harbers M."/>
            <person name="Hayashi Y."/>
            <person name="Hensch T.K."/>
            <person name="Hirokawa N."/>
            <person name="Hill D."/>
            <person name="Huminiecki L."/>
            <person name="Iacono M."/>
            <person name="Ikeo K."/>
            <person name="Iwama A."/>
            <person name="Ishikawa T."/>
            <person name="Jakt M."/>
            <person name="Kanapin A."/>
            <person name="Katoh M."/>
            <person name="Kawasawa Y."/>
            <person name="Kelso J."/>
            <person name="Kitamura H."/>
            <person name="Kitano H."/>
            <person name="Kollias G."/>
            <person name="Krishnan S.P."/>
            <person name="Kruger A."/>
            <person name="Kummerfeld S.K."/>
            <person name="Kurochkin I.V."/>
            <person name="Lareau L.F."/>
            <person name="Lazarevic D."/>
            <person name="Lipovich L."/>
            <person name="Liu J."/>
            <person name="Liuni S."/>
            <person name="McWilliam S."/>
            <person name="Madan Babu M."/>
            <person name="Madera M."/>
            <person name="Marchionni L."/>
            <person name="Matsuda H."/>
            <person name="Matsuzawa S."/>
            <person name="Miki H."/>
            <person name="Mignone F."/>
            <person name="Miyake S."/>
            <person name="Morris K."/>
            <person name="Mottagui-Tabar S."/>
            <person name="Mulder N."/>
            <person name="Nakano N."/>
            <person name="Nakauchi H."/>
            <person name="Ng P."/>
            <person name="Nilsson R."/>
            <person name="Nishiguchi S."/>
            <person name="Nishikawa S."/>
            <person name="Nori F."/>
            <person name="Ohara O."/>
            <person name="Okazaki Y."/>
            <person name="Orlando V."/>
            <person name="Pang K.C."/>
            <person name="Pavan W.J."/>
            <person name="Pavesi G."/>
            <person name="Pesole G."/>
            <person name="Petrovsky N."/>
            <person name="Piazza S."/>
            <person name="Reed J."/>
            <person name="Reid J.F."/>
            <person name="Ring B.Z."/>
            <person name="Ringwald M."/>
            <person name="Rost B."/>
            <person name="Ruan Y."/>
            <person name="Salzberg S.L."/>
            <person name="Sandelin A."/>
            <person name="Schneider C."/>
            <person name="Schoenbach C."/>
            <person name="Sekiguchi K."/>
            <person name="Semple C.A."/>
            <person name="Seno S."/>
            <person name="Sessa L."/>
            <person name="Sheng Y."/>
            <person name="Shibata Y."/>
            <person name="Shimada H."/>
            <person name="Shimada K."/>
            <person name="Silva D."/>
            <person name="Sinclair B."/>
            <person name="Sperling S."/>
            <person name="Stupka E."/>
            <person name="Sugiura K."/>
            <person name="Sultana R."/>
            <person name="Takenaka Y."/>
            <person name="Taki K."/>
            <person name="Tammoja K."/>
            <person name="Tan S.L."/>
            <person name="Tang S."/>
            <person name="Taylor M.S."/>
            <person name="Tegner J."/>
            <person name="Teichmann S.A."/>
            <person name="Ueda H.R."/>
            <person name="van Nimwegen E."/>
            <person name="Verardo R."/>
            <person name="Wei C.L."/>
            <person name="Yagi K."/>
            <person name="Yamanishi H."/>
            <person name="Zabarovsky E."/>
            <person name="Zhu S."/>
            <person name="Zimmer A."/>
            <person name="Hide W."/>
            <person name="Bult C."/>
            <person name="Grimmond S.M."/>
            <person name="Teasdale R.D."/>
            <person name="Liu E.T."/>
            <person name="Brusic V."/>
            <person name="Quackenbush J."/>
            <person name="Wahlestedt C."/>
            <person name="Mattick J.S."/>
            <person name="Hume D.A."/>
            <person name="Kai C."/>
            <person name="Sasaki D."/>
            <person name="Tomaru Y."/>
            <person name="Fukuda S."/>
            <person name="Kanamori-Katayama M."/>
            <person name="Suzuki M."/>
            <person name="Aoki J."/>
            <person name="Arakawa T."/>
            <person name="Iida J."/>
            <person name="Imamura K."/>
            <person name="Itoh M."/>
            <person name="Kato T."/>
            <person name="Kawaji H."/>
            <person name="Kawagashira N."/>
            <person name="Kawashima T."/>
            <person name="Kojima M."/>
            <person name="Kondo S."/>
            <person name="Konno H."/>
            <person name="Nakano K."/>
            <person name="Ninomiya N."/>
            <person name="Nishio T."/>
            <person name="Okada M."/>
            <person name="Plessy C."/>
            <person name="Shibata K."/>
            <person name="Shiraki T."/>
            <person name="Suzuki S."/>
            <person name="Tagami M."/>
            <person name="Waki K."/>
            <person name="Watahiki A."/>
            <person name="Okamura-Oho Y."/>
            <person name="Suzuki H."/>
            <person name="Kawai J."/>
            <person name="Hayashizaki Y."/>
        </authorList>
    </citation>
    <scope>NUCLEOTIDE SEQUENCE [LARGE SCALE MRNA]</scope>
    <source>
        <strain>C57BL/6J</strain>
        <tissue>Embryo</tissue>
    </source>
</reference>
<reference key="2">
    <citation type="journal article" date="2009" name="PLoS Biol.">
        <title>Lineage-specific biology revealed by a finished genome assembly of the mouse.</title>
        <authorList>
            <person name="Church D.M."/>
            <person name="Goodstadt L."/>
            <person name="Hillier L.W."/>
            <person name="Zody M.C."/>
            <person name="Goldstein S."/>
            <person name="She X."/>
            <person name="Bult C.J."/>
            <person name="Agarwala R."/>
            <person name="Cherry J.L."/>
            <person name="DiCuccio M."/>
            <person name="Hlavina W."/>
            <person name="Kapustin Y."/>
            <person name="Meric P."/>
            <person name="Maglott D."/>
            <person name="Birtle Z."/>
            <person name="Marques A.C."/>
            <person name="Graves T."/>
            <person name="Zhou S."/>
            <person name="Teague B."/>
            <person name="Potamousis K."/>
            <person name="Churas C."/>
            <person name="Place M."/>
            <person name="Herschleb J."/>
            <person name="Runnheim R."/>
            <person name="Forrest D."/>
            <person name="Amos-Landgraf J."/>
            <person name="Schwartz D.C."/>
            <person name="Cheng Z."/>
            <person name="Lindblad-Toh K."/>
            <person name="Eichler E.E."/>
            <person name="Ponting C.P."/>
        </authorList>
    </citation>
    <scope>NUCLEOTIDE SEQUENCE [LARGE SCALE GENOMIC DNA]</scope>
    <source>
        <strain>C57BL/6J</strain>
    </source>
</reference>
<proteinExistence type="evidence at transcript level"/>
<feature type="chain" id="PRO_0000309179" description="UPF0500 protein C1orf216 homolog">
    <location>
        <begin position="1"/>
        <end position="230"/>
    </location>
</feature>
<feature type="region of interest" description="Disordered" evidence="1">
    <location>
        <begin position="1"/>
        <end position="103"/>
    </location>
</feature>
<feature type="compositionally biased region" description="Polar residues" evidence="1">
    <location>
        <begin position="60"/>
        <end position="73"/>
    </location>
</feature>
<feature type="compositionally biased region" description="Low complexity" evidence="1">
    <location>
        <begin position="85"/>
        <end position="94"/>
    </location>
</feature>
<feature type="sequence conflict" description="In Ref. 1; BAC36801." evidence="2" ref="1">
    <original>R</original>
    <variation>H</variation>
    <location>
        <position position="215"/>
    </location>
</feature>